<accession>B5YFB8</accession>
<name>GCSPA_DICT6</name>
<keyword id="KW-0560">Oxidoreductase</keyword>
<reference key="1">
    <citation type="journal article" date="2014" name="Genome Announc.">
        <title>Complete Genome Sequence of the Extreme Thermophile Dictyoglomus thermophilum H-6-12.</title>
        <authorList>
            <person name="Coil D.A."/>
            <person name="Badger J.H."/>
            <person name="Forberger H.C."/>
            <person name="Riggs F."/>
            <person name="Madupu R."/>
            <person name="Fedorova N."/>
            <person name="Ward N."/>
            <person name="Robb F.T."/>
            <person name="Eisen J.A."/>
        </authorList>
    </citation>
    <scope>NUCLEOTIDE SEQUENCE [LARGE SCALE GENOMIC DNA]</scope>
    <source>
        <strain>ATCC 35947 / DSM 3960 / H-6-12</strain>
    </source>
</reference>
<organism>
    <name type="scientific">Dictyoglomus thermophilum (strain ATCC 35947 / DSM 3960 / H-6-12)</name>
    <dbReference type="NCBI Taxonomy" id="309799"/>
    <lineage>
        <taxon>Bacteria</taxon>
        <taxon>Pseudomonadati</taxon>
        <taxon>Dictyoglomota</taxon>
        <taxon>Dictyoglomia</taxon>
        <taxon>Dictyoglomales</taxon>
        <taxon>Dictyoglomaceae</taxon>
        <taxon>Dictyoglomus</taxon>
    </lineage>
</organism>
<protein>
    <recommendedName>
        <fullName evidence="1">Probable glycine dehydrogenase (decarboxylating) subunit 1</fullName>
        <ecNumber evidence="1">1.4.4.2</ecNumber>
    </recommendedName>
    <alternativeName>
        <fullName evidence="1">Glycine cleavage system P-protein subunit 1</fullName>
    </alternativeName>
    <alternativeName>
        <fullName evidence="1">Glycine decarboxylase subunit 1</fullName>
    </alternativeName>
    <alternativeName>
        <fullName evidence="1">Glycine dehydrogenase (aminomethyl-transferring) subunit 1</fullName>
    </alternativeName>
</protein>
<proteinExistence type="inferred from homology"/>
<sequence>MTYFPHTPQEIKEMLNTIGLESIEDLFSEIPEEIRQKAKENFKIPASPSEIDLLEEIKNIARKNIGKDYISFLGGGAYKHYIPPFVKLVSLFPTFYTAYTPYQPEISQGVLQSIFEYQSLICDLTGMEVANASLYEAGSGIAEAALMSVRITGKKEVIASSGLNPEYISVLKTYLQAQNIELKIIPLDEKGETDVDFLEKNISPKTSGVIIQNPNFFGVIETKLKDIEELIHKNNALFILSIYPISLGILKPPSEYNVDIVVGEGQSLGIPLGFGGPYLGILATKKEFIRQIPGRIVGETIDLEGERGFVNTLQTREQHIRRAKATSNICTNEALSAISAAVYMAILGKKGIKKIAEVCFSRAHYLRERMQKEVNLEITYPNSHFFNEFVIKIPENSENFLKKLEEKKILGGIPLSRFYKDRDKEILVAVTERNSLEELEYYIKSLKEVLKKN</sequence>
<gene>
    <name evidence="1" type="primary">gcvPA</name>
    <name type="ordered locus">DICTH_1407</name>
</gene>
<comment type="function">
    <text evidence="1">The glycine cleavage system catalyzes the degradation of glycine. The P protein binds the alpha-amino group of glycine through its pyridoxal phosphate cofactor; CO(2) is released and the remaining methylamine moiety is then transferred to the lipoamide cofactor of the H protein.</text>
</comment>
<comment type="catalytic activity">
    <reaction evidence="1">
        <text>N(6)-[(R)-lipoyl]-L-lysyl-[glycine-cleavage complex H protein] + glycine + H(+) = N(6)-[(R)-S(8)-aminomethyldihydrolipoyl]-L-lysyl-[glycine-cleavage complex H protein] + CO2</text>
        <dbReference type="Rhea" id="RHEA:24304"/>
        <dbReference type="Rhea" id="RHEA-COMP:10494"/>
        <dbReference type="Rhea" id="RHEA-COMP:10495"/>
        <dbReference type="ChEBI" id="CHEBI:15378"/>
        <dbReference type="ChEBI" id="CHEBI:16526"/>
        <dbReference type="ChEBI" id="CHEBI:57305"/>
        <dbReference type="ChEBI" id="CHEBI:83099"/>
        <dbReference type="ChEBI" id="CHEBI:83143"/>
        <dbReference type="EC" id="1.4.4.2"/>
    </reaction>
</comment>
<comment type="subunit">
    <text evidence="1">The glycine cleavage system is composed of four proteins: P, T, L and H. In this organism, the P 'protein' is a heterodimer of two subunits.</text>
</comment>
<comment type="similarity">
    <text evidence="1">Belongs to the GcvP family. N-terminal subunit subfamily.</text>
</comment>
<feature type="chain" id="PRO_1000147984" description="Probable glycine dehydrogenase (decarboxylating) subunit 1">
    <location>
        <begin position="1"/>
        <end position="453"/>
    </location>
</feature>
<dbReference type="EC" id="1.4.4.2" evidence="1"/>
<dbReference type="EMBL" id="CP001146">
    <property type="protein sequence ID" value="ACI19857.1"/>
    <property type="molecule type" value="Genomic_DNA"/>
</dbReference>
<dbReference type="RefSeq" id="WP_012548489.1">
    <property type="nucleotide sequence ID" value="NC_011297.1"/>
</dbReference>
<dbReference type="SMR" id="B5YFB8"/>
<dbReference type="STRING" id="309799.DICTH_1407"/>
<dbReference type="PaxDb" id="309799-DICTH_1407"/>
<dbReference type="KEGG" id="dth:DICTH_1407"/>
<dbReference type="eggNOG" id="COG0403">
    <property type="taxonomic scope" value="Bacteria"/>
</dbReference>
<dbReference type="HOGENOM" id="CLU_004620_0_2_0"/>
<dbReference type="OrthoDB" id="9801272at2"/>
<dbReference type="Proteomes" id="UP000001733">
    <property type="component" value="Chromosome"/>
</dbReference>
<dbReference type="GO" id="GO:0004375">
    <property type="term" value="F:glycine dehydrogenase (decarboxylating) activity"/>
    <property type="evidence" value="ECO:0007669"/>
    <property type="project" value="UniProtKB-EC"/>
</dbReference>
<dbReference type="GO" id="GO:0019464">
    <property type="term" value="P:glycine decarboxylation via glycine cleavage system"/>
    <property type="evidence" value="ECO:0007669"/>
    <property type="project" value="UniProtKB-UniRule"/>
</dbReference>
<dbReference type="GO" id="GO:0009116">
    <property type="term" value="P:nucleoside metabolic process"/>
    <property type="evidence" value="ECO:0007669"/>
    <property type="project" value="InterPro"/>
</dbReference>
<dbReference type="CDD" id="cd00613">
    <property type="entry name" value="GDC-P"/>
    <property type="match status" value="1"/>
</dbReference>
<dbReference type="Gene3D" id="3.90.1150.10">
    <property type="entry name" value="Aspartate Aminotransferase, domain 1"/>
    <property type="match status" value="1"/>
</dbReference>
<dbReference type="Gene3D" id="3.40.640.10">
    <property type="entry name" value="Type I PLP-dependent aspartate aminotransferase-like (Major domain)"/>
    <property type="match status" value="1"/>
</dbReference>
<dbReference type="HAMAP" id="MF_00712">
    <property type="entry name" value="GcvPA"/>
    <property type="match status" value="1"/>
</dbReference>
<dbReference type="InterPro" id="IPR023010">
    <property type="entry name" value="GcvPA"/>
</dbReference>
<dbReference type="InterPro" id="IPR049315">
    <property type="entry name" value="GDC-P_N"/>
</dbReference>
<dbReference type="InterPro" id="IPR020581">
    <property type="entry name" value="GDC_P"/>
</dbReference>
<dbReference type="InterPro" id="IPR015424">
    <property type="entry name" value="PyrdxlP-dep_Trfase"/>
</dbReference>
<dbReference type="InterPro" id="IPR015421">
    <property type="entry name" value="PyrdxlP-dep_Trfase_major"/>
</dbReference>
<dbReference type="InterPro" id="IPR015422">
    <property type="entry name" value="PyrdxlP-dep_Trfase_small"/>
</dbReference>
<dbReference type="NCBIfam" id="NF001696">
    <property type="entry name" value="PRK00451.1"/>
    <property type="match status" value="1"/>
</dbReference>
<dbReference type="PANTHER" id="PTHR42806">
    <property type="entry name" value="GLYCINE CLEAVAGE SYSTEM P-PROTEIN"/>
    <property type="match status" value="1"/>
</dbReference>
<dbReference type="PANTHER" id="PTHR42806:SF1">
    <property type="entry name" value="GLYCINE DEHYDROGENASE (DECARBOXYLATING)"/>
    <property type="match status" value="1"/>
</dbReference>
<dbReference type="Pfam" id="PF02347">
    <property type="entry name" value="GDC-P"/>
    <property type="match status" value="1"/>
</dbReference>
<dbReference type="PIRSF" id="PIRSF006815">
    <property type="entry name" value="GcvPA"/>
    <property type="match status" value="1"/>
</dbReference>
<dbReference type="SUPFAM" id="SSF53383">
    <property type="entry name" value="PLP-dependent transferases"/>
    <property type="match status" value="1"/>
</dbReference>
<evidence type="ECO:0000255" key="1">
    <source>
        <dbReference type="HAMAP-Rule" id="MF_00712"/>
    </source>
</evidence>